<feature type="chain" id="PRO_0000182066" description="UDP-N-acetylmuramate--L-alanine ligase">
    <location>
        <begin position="1"/>
        <end position="471"/>
    </location>
</feature>
<feature type="binding site" evidence="1">
    <location>
        <begin position="114"/>
        <end position="120"/>
    </location>
    <ligand>
        <name>ATP</name>
        <dbReference type="ChEBI" id="CHEBI:30616"/>
    </ligand>
</feature>
<dbReference type="EC" id="6.3.2.8" evidence="1"/>
<dbReference type="EMBL" id="AE008917">
    <property type="protein sequence ID" value="AAL51761.1"/>
    <property type="molecule type" value="Genomic_DNA"/>
</dbReference>
<dbReference type="PIR" id="AF3324">
    <property type="entry name" value="AF3324"/>
</dbReference>
<dbReference type="RefSeq" id="WP_002964538.1">
    <property type="nucleotide sequence ID" value="NZ_GG703780.1"/>
</dbReference>
<dbReference type="SMR" id="P65468"/>
<dbReference type="GeneID" id="97533364"/>
<dbReference type="KEGG" id="bme:BMEI0580"/>
<dbReference type="KEGG" id="bmel:DK63_846"/>
<dbReference type="PATRIC" id="fig|224914.52.peg.889"/>
<dbReference type="eggNOG" id="COG0773">
    <property type="taxonomic scope" value="Bacteria"/>
</dbReference>
<dbReference type="PhylomeDB" id="P65468"/>
<dbReference type="UniPathway" id="UPA00219"/>
<dbReference type="Proteomes" id="UP000000419">
    <property type="component" value="Chromosome I"/>
</dbReference>
<dbReference type="GO" id="GO:0005737">
    <property type="term" value="C:cytoplasm"/>
    <property type="evidence" value="ECO:0007669"/>
    <property type="project" value="UniProtKB-SubCell"/>
</dbReference>
<dbReference type="GO" id="GO:0005524">
    <property type="term" value="F:ATP binding"/>
    <property type="evidence" value="ECO:0007669"/>
    <property type="project" value="UniProtKB-UniRule"/>
</dbReference>
<dbReference type="GO" id="GO:0008763">
    <property type="term" value="F:UDP-N-acetylmuramate-L-alanine ligase activity"/>
    <property type="evidence" value="ECO:0007669"/>
    <property type="project" value="UniProtKB-UniRule"/>
</dbReference>
<dbReference type="GO" id="GO:0051301">
    <property type="term" value="P:cell division"/>
    <property type="evidence" value="ECO:0007669"/>
    <property type="project" value="UniProtKB-KW"/>
</dbReference>
<dbReference type="GO" id="GO:0071555">
    <property type="term" value="P:cell wall organization"/>
    <property type="evidence" value="ECO:0007669"/>
    <property type="project" value="UniProtKB-KW"/>
</dbReference>
<dbReference type="GO" id="GO:0009252">
    <property type="term" value="P:peptidoglycan biosynthetic process"/>
    <property type="evidence" value="ECO:0007669"/>
    <property type="project" value="UniProtKB-UniRule"/>
</dbReference>
<dbReference type="GO" id="GO:0008360">
    <property type="term" value="P:regulation of cell shape"/>
    <property type="evidence" value="ECO:0007669"/>
    <property type="project" value="UniProtKB-KW"/>
</dbReference>
<dbReference type="Gene3D" id="3.90.190.20">
    <property type="entry name" value="Mur ligase, C-terminal domain"/>
    <property type="match status" value="1"/>
</dbReference>
<dbReference type="Gene3D" id="3.40.1190.10">
    <property type="entry name" value="Mur-like, catalytic domain"/>
    <property type="match status" value="1"/>
</dbReference>
<dbReference type="Gene3D" id="3.40.50.720">
    <property type="entry name" value="NAD(P)-binding Rossmann-like Domain"/>
    <property type="match status" value="1"/>
</dbReference>
<dbReference type="HAMAP" id="MF_00046">
    <property type="entry name" value="MurC"/>
    <property type="match status" value="1"/>
</dbReference>
<dbReference type="InterPro" id="IPR036565">
    <property type="entry name" value="Mur-like_cat_sf"/>
</dbReference>
<dbReference type="InterPro" id="IPR004101">
    <property type="entry name" value="Mur_ligase_C"/>
</dbReference>
<dbReference type="InterPro" id="IPR036615">
    <property type="entry name" value="Mur_ligase_C_dom_sf"/>
</dbReference>
<dbReference type="InterPro" id="IPR013221">
    <property type="entry name" value="Mur_ligase_cen"/>
</dbReference>
<dbReference type="InterPro" id="IPR000713">
    <property type="entry name" value="Mur_ligase_N"/>
</dbReference>
<dbReference type="InterPro" id="IPR050061">
    <property type="entry name" value="MurCDEF_pg_biosynth"/>
</dbReference>
<dbReference type="InterPro" id="IPR005758">
    <property type="entry name" value="UDP-N-AcMur_Ala_ligase_MurC"/>
</dbReference>
<dbReference type="NCBIfam" id="TIGR01082">
    <property type="entry name" value="murC"/>
    <property type="match status" value="1"/>
</dbReference>
<dbReference type="PANTHER" id="PTHR43445:SF3">
    <property type="entry name" value="UDP-N-ACETYLMURAMATE--L-ALANINE LIGASE"/>
    <property type="match status" value="1"/>
</dbReference>
<dbReference type="PANTHER" id="PTHR43445">
    <property type="entry name" value="UDP-N-ACETYLMURAMATE--L-ALANINE LIGASE-RELATED"/>
    <property type="match status" value="1"/>
</dbReference>
<dbReference type="Pfam" id="PF01225">
    <property type="entry name" value="Mur_ligase"/>
    <property type="match status" value="1"/>
</dbReference>
<dbReference type="Pfam" id="PF02875">
    <property type="entry name" value="Mur_ligase_C"/>
    <property type="match status" value="1"/>
</dbReference>
<dbReference type="Pfam" id="PF08245">
    <property type="entry name" value="Mur_ligase_M"/>
    <property type="match status" value="1"/>
</dbReference>
<dbReference type="SUPFAM" id="SSF51984">
    <property type="entry name" value="MurCD N-terminal domain"/>
    <property type="match status" value="1"/>
</dbReference>
<dbReference type="SUPFAM" id="SSF53623">
    <property type="entry name" value="MurD-like peptide ligases, catalytic domain"/>
    <property type="match status" value="1"/>
</dbReference>
<dbReference type="SUPFAM" id="SSF53244">
    <property type="entry name" value="MurD-like peptide ligases, peptide-binding domain"/>
    <property type="match status" value="1"/>
</dbReference>
<accession>P65468</accession>
<accession>Q8YI65</accession>
<comment type="function">
    <text evidence="1">Cell wall formation.</text>
</comment>
<comment type="catalytic activity">
    <reaction evidence="1">
        <text>UDP-N-acetyl-alpha-D-muramate + L-alanine + ATP = UDP-N-acetyl-alpha-D-muramoyl-L-alanine + ADP + phosphate + H(+)</text>
        <dbReference type="Rhea" id="RHEA:23372"/>
        <dbReference type="ChEBI" id="CHEBI:15378"/>
        <dbReference type="ChEBI" id="CHEBI:30616"/>
        <dbReference type="ChEBI" id="CHEBI:43474"/>
        <dbReference type="ChEBI" id="CHEBI:57972"/>
        <dbReference type="ChEBI" id="CHEBI:70757"/>
        <dbReference type="ChEBI" id="CHEBI:83898"/>
        <dbReference type="ChEBI" id="CHEBI:456216"/>
        <dbReference type="EC" id="6.3.2.8"/>
    </reaction>
</comment>
<comment type="pathway">
    <text evidence="1">Cell wall biogenesis; peptidoglycan biosynthesis.</text>
</comment>
<comment type="subcellular location">
    <subcellularLocation>
        <location evidence="1">Cytoplasm</location>
    </subcellularLocation>
</comment>
<comment type="similarity">
    <text evidence="1">Belongs to the MurCDEF family.</text>
</comment>
<evidence type="ECO:0000255" key="1">
    <source>
        <dbReference type="HAMAP-Rule" id="MF_00046"/>
    </source>
</evidence>
<keyword id="KW-0067">ATP-binding</keyword>
<keyword id="KW-0131">Cell cycle</keyword>
<keyword id="KW-0132">Cell division</keyword>
<keyword id="KW-0133">Cell shape</keyword>
<keyword id="KW-0961">Cell wall biogenesis/degradation</keyword>
<keyword id="KW-0963">Cytoplasm</keyword>
<keyword id="KW-0436">Ligase</keyword>
<keyword id="KW-0547">Nucleotide-binding</keyword>
<keyword id="KW-0573">Peptidoglycan synthesis</keyword>
<organism>
    <name type="scientific">Brucella melitensis biotype 1 (strain ATCC 23456 / CCUG 17765 / NCTC 10094 / 16M)</name>
    <dbReference type="NCBI Taxonomy" id="224914"/>
    <lineage>
        <taxon>Bacteria</taxon>
        <taxon>Pseudomonadati</taxon>
        <taxon>Pseudomonadota</taxon>
        <taxon>Alphaproteobacteria</taxon>
        <taxon>Hyphomicrobiales</taxon>
        <taxon>Brucellaceae</taxon>
        <taxon>Brucella/Ochrobactrum group</taxon>
        <taxon>Brucella</taxon>
    </lineage>
</organism>
<sequence length="471" mass="50794">MKMPLNIGLVHFIGIGGIGMSGIAEVLHNLGYKVQGSDQSDSANVQRLREKGIEVFVGHKAENLGDAEVIVVSTAIKKNNPELVAAREKLLPVVRRAEMLAELMRFRRAVAIGGTHGKTTTTSLVAALLDAGHLDPTVINGGIINAYGTNARMGDGDWMVVEADESDGTFLKLPADIAVVTNIDPEHLDHYGNFDAVRAAFRQFVENVPFYGFGVMCLDHPEVQALVSRIEDRRIITYGSNPQAEVRFVNQRMDGAASLFDVVIRSRKGEATEIKDLRLPMPGLHNVSNATAAIAVAHELGISSDDIRRGLGSFGGVKRRFTHTGSWNGVEIFDDYGHHPVEIRAVLKAAREATSQAGGRVVAIVQPHRYTRLASLFDEFAACFNDADTVIVAPVYTAGEEPIEGVNSEELVSRIKTAGHRDARYATGPEALAPLVASIAQAGDFVVCLGAGNVTQWAYALPKELAEQGKK</sequence>
<reference key="1">
    <citation type="journal article" date="2002" name="Proc. Natl. Acad. Sci. U.S.A.">
        <title>The genome sequence of the facultative intracellular pathogen Brucella melitensis.</title>
        <authorList>
            <person name="DelVecchio V.G."/>
            <person name="Kapatral V."/>
            <person name="Redkar R.J."/>
            <person name="Patra G."/>
            <person name="Mujer C."/>
            <person name="Los T."/>
            <person name="Ivanova N."/>
            <person name="Anderson I."/>
            <person name="Bhattacharyya A."/>
            <person name="Lykidis A."/>
            <person name="Reznik G."/>
            <person name="Jablonski L."/>
            <person name="Larsen N."/>
            <person name="D'Souza M."/>
            <person name="Bernal A."/>
            <person name="Mazur M."/>
            <person name="Goltsman E."/>
            <person name="Selkov E."/>
            <person name="Elzer P.H."/>
            <person name="Hagius S."/>
            <person name="O'Callaghan D."/>
            <person name="Letesson J.-J."/>
            <person name="Haselkorn R."/>
            <person name="Kyrpides N.C."/>
            <person name="Overbeek R."/>
        </authorList>
    </citation>
    <scope>NUCLEOTIDE SEQUENCE [LARGE SCALE GENOMIC DNA]</scope>
    <source>
        <strain>ATCC 23456 / CCUG 17765 / NCTC 10094 / 16M</strain>
    </source>
</reference>
<gene>
    <name evidence="1" type="primary">murC</name>
    <name type="ordered locus">BMEI0580</name>
</gene>
<name>MURC_BRUME</name>
<proteinExistence type="inferred from homology"/>
<protein>
    <recommendedName>
        <fullName evidence="1">UDP-N-acetylmuramate--L-alanine ligase</fullName>
        <ecNumber evidence="1">6.3.2.8</ecNumber>
    </recommendedName>
    <alternativeName>
        <fullName evidence="1">UDP-N-acetylmuramoyl-L-alanine synthetase</fullName>
    </alternativeName>
</protein>